<organism>
    <name type="scientific">Shewanella putrefaciens (strain CN-32 / ATCC BAA-453)</name>
    <dbReference type="NCBI Taxonomy" id="319224"/>
    <lineage>
        <taxon>Bacteria</taxon>
        <taxon>Pseudomonadati</taxon>
        <taxon>Pseudomonadota</taxon>
        <taxon>Gammaproteobacteria</taxon>
        <taxon>Alteromonadales</taxon>
        <taxon>Shewanellaceae</taxon>
        <taxon>Shewanella</taxon>
    </lineage>
</organism>
<dbReference type="EC" id="4.2.1.10" evidence="1"/>
<dbReference type="EMBL" id="CP000681">
    <property type="protein sequence ID" value="ABP77060.1"/>
    <property type="molecule type" value="Genomic_DNA"/>
</dbReference>
<dbReference type="SMR" id="A4YAS7"/>
<dbReference type="STRING" id="319224.Sputcn32_3348"/>
<dbReference type="KEGG" id="spc:Sputcn32_3348"/>
<dbReference type="eggNOG" id="COG0757">
    <property type="taxonomic scope" value="Bacteria"/>
</dbReference>
<dbReference type="HOGENOM" id="CLU_090968_1_0_6"/>
<dbReference type="UniPathway" id="UPA00053">
    <property type="reaction ID" value="UER00086"/>
</dbReference>
<dbReference type="GO" id="GO:0003855">
    <property type="term" value="F:3-dehydroquinate dehydratase activity"/>
    <property type="evidence" value="ECO:0007669"/>
    <property type="project" value="UniProtKB-UniRule"/>
</dbReference>
<dbReference type="GO" id="GO:0008652">
    <property type="term" value="P:amino acid biosynthetic process"/>
    <property type="evidence" value="ECO:0007669"/>
    <property type="project" value="UniProtKB-KW"/>
</dbReference>
<dbReference type="GO" id="GO:0009073">
    <property type="term" value="P:aromatic amino acid family biosynthetic process"/>
    <property type="evidence" value="ECO:0007669"/>
    <property type="project" value="UniProtKB-KW"/>
</dbReference>
<dbReference type="GO" id="GO:0009423">
    <property type="term" value="P:chorismate biosynthetic process"/>
    <property type="evidence" value="ECO:0007669"/>
    <property type="project" value="UniProtKB-UniRule"/>
</dbReference>
<dbReference type="GO" id="GO:0019631">
    <property type="term" value="P:quinate catabolic process"/>
    <property type="evidence" value="ECO:0007669"/>
    <property type="project" value="TreeGrafter"/>
</dbReference>
<dbReference type="CDD" id="cd00466">
    <property type="entry name" value="DHQase_II"/>
    <property type="match status" value="1"/>
</dbReference>
<dbReference type="Gene3D" id="3.40.50.9100">
    <property type="entry name" value="Dehydroquinase, class II"/>
    <property type="match status" value="1"/>
</dbReference>
<dbReference type="HAMAP" id="MF_00169">
    <property type="entry name" value="AroQ"/>
    <property type="match status" value="1"/>
</dbReference>
<dbReference type="InterPro" id="IPR001874">
    <property type="entry name" value="DHquinase_II"/>
</dbReference>
<dbReference type="InterPro" id="IPR018509">
    <property type="entry name" value="DHquinase_II_CS"/>
</dbReference>
<dbReference type="InterPro" id="IPR036441">
    <property type="entry name" value="DHquinase_II_sf"/>
</dbReference>
<dbReference type="NCBIfam" id="TIGR01088">
    <property type="entry name" value="aroQ"/>
    <property type="match status" value="1"/>
</dbReference>
<dbReference type="NCBIfam" id="NF003804">
    <property type="entry name" value="PRK05395.1-1"/>
    <property type="match status" value="1"/>
</dbReference>
<dbReference type="NCBIfam" id="NF003805">
    <property type="entry name" value="PRK05395.1-2"/>
    <property type="match status" value="1"/>
</dbReference>
<dbReference type="NCBIfam" id="NF003806">
    <property type="entry name" value="PRK05395.1-3"/>
    <property type="match status" value="1"/>
</dbReference>
<dbReference type="NCBIfam" id="NF003807">
    <property type="entry name" value="PRK05395.1-4"/>
    <property type="match status" value="1"/>
</dbReference>
<dbReference type="PANTHER" id="PTHR21272">
    <property type="entry name" value="CATABOLIC 3-DEHYDROQUINASE"/>
    <property type="match status" value="1"/>
</dbReference>
<dbReference type="PANTHER" id="PTHR21272:SF3">
    <property type="entry name" value="CATABOLIC 3-DEHYDROQUINASE"/>
    <property type="match status" value="1"/>
</dbReference>
<dbReference type="Pfam" id="PF01220">
    <property type="entry name" value="DHquinase_II"/>
    <property type="match status" value="1"/>
</dbReference>
<dbReference type="PIRSF" id="PIRSF001399">
    <property type="entry name" value="DHquinase_II"/>
    <property type="match status" value="1"/>
</dbReference>
<dbReference type="SUPFAM" id="SSF52304">
    <property type="entry name" value="Type II 3-dehydroquinate dehydratase"/>
    <property type="match status" value="1"/>
</dbReference>
<dbReference type="PROSITE" id="PS01029">
    <property type="entry name" value="DEHYDROQUINASE_II"/>
    <property type="match status" value="1"/>
</dbReference>
<evidence type="ECO:0000255" key="1">
    <source>
        <dbReference type="HAMAP-Rule" id="MF_00169"/>
    </source>
</evidence>
<keyword id="KW-0028">Amino-acid biosynthesis</keyword>
<keyword id="KW-0057">Aromatic amino acid biosynthesis</keyword>
<keyword id="KW-0456">Lyase</keyword>
<feature type="chain" id="PRO_1000023513" description="3-dehydroquinate dehydratase">
    <location>
        <begin position="1"/>
        <end position="144"/>
    </location>
</feature>
<feature type="active site" description="Proton acceptor" evidence="1">
    <location>
        <position position="24"/>
    </location>
</feature>
<feature type="active site" description="Proton donor" evidence="1">
    <location>
        <position position="99"/>
    </location>
</feature>
<feature type="binding site" evidence="1">
    <location>
        <position position="73"/>
    </location>
    <ligand>
        <name>substrate</name>
    </ligand>
</feature>
<feature type="binding site" evidence="1">
    <location>
        <position position="79"/>
    </location>
    <ligand>
        <name>substrate</name>
    </ligand>
</feature>
<feature type="binding site" evidence="1">
    <location>
        <position position="86"/>
    </location>
    <ligand>
        <name>substrate</name>
    </ligand>
</feature>
<feature type="binding site" evidence="1">
    <location>
        <begin position="100"/>
        <end position="101"/>
    </location>
    <ligand>
        <name>substrate</name>
    </ligand>
</feature>
<feature type="binding site" evidence="1">
    <location>
        <position position="110"/>
    </location>
    <ligand>
        <name>substrate</name>
    </ligand>
</feature>
<feature type="site" description="Transition state stabilizer" evidence="1">
    <location>
        <position position="19"/>
    </location>
</feature>
<comment type="function">
    <text evidence="1">Catalyzes a trans-dehydration via an enolate intermediate.</text>
</comment>
<comment type="catalytic activity">
    <reaction evidence="1">
        <text>3-dehydroquinate = 3-dehydroshikimate + H2O</text>
        <dbReference type="Rhea" id="RHEA:21096"/>
        <dbReference type="ChEBI" id="CHEBI:15377"/>
        <dbReference type="ChEBI" id="CHEBI:16630"/>
        <dbReference type="ChEBI" id="CHEBI:32364"/>
        <dbReference type="EC" id="4.2.1.10"/>
    </reaction>
</comment>
<comment type="pathway">
    <text evidence="1">Metabolic intermediate biosynthesis; chorismate biosynthesis; chorismate from D-erythrose 4-phosphate and phosphoenolpyruvate: step 3/7.</text>
</comment>
<comment type="subunit">
    <text evidence="1">Homododecamer.</text>
</comment>
<comment type="similarity">
    <text evidence="1">Belongs to the type-II 3-dehydroquinase family.</text>
</comment>
<proteinExistence type="inferred from homology"/>
<reference key="1">
    <citation type="submission" date="2007-04" db="EMBL/GenBank/DDBJ databases">
        <title>Complete sequence of Shewanella putrefaciens CN-32.</title>
        <authorList>
            <consortium name="US DOE Joint Genome Institute"/>
            <person name="Copeland A."/>
            <person name="Lucas S."/>
            <person name="Lapidus A."/>
            <person name="Barry K."/>
            <person name="Detter J.C."/>
            <person name="Glavina del Rio T."/>
            <person name="Hammon N."/>
            <person name="Israni S."/>
            <person name="Dalin E."/>
            <person name="Tice H."/>
            <person name="Pitluck S."/>
            <person name="Chain P."/>
            <person name="Malfatti S."/>
            <person name="Shin M."/>
            <person name="Vergez L."/>
            <person name="Schmutz J."/>
            <person name="Larimer F."/>
            <person name="Land M."/>
            <person name="Hauser L."/>
            <person name="Kyrpides N."/>
            <person name="Mikhailova N."/>
            <person name="Romine M.F."/>
            <person name="Fredrickson J."/>
            <person name="Tiedje J."/>
            <person name="Richardson P."/>
        </authorList>
    </citation>
    <scope>NUCLEOTIDE SEQUENCE [LARGE SCALE GENOMIC DNA]</scope>
    <source>
        <strain>CN-32 / ATCC BAA-453</strain>
    </source>
</reference>
<accession>A4YAS7</accession>
<protein>
    <recommendedName>
        <fullName evidence="1">3-dehydroquinate dehydratase</fullName>
        <shortName evidence="1">3-dehydroquinase</shortName>
        <ecNumber evidence="1">4.2.1.10</ecNumber>
    </recommendedName>
    <alternativeName>
        <fullName evidence="1">Type II DHQase</fullName>
    </alternativeName>
</protein>
<gene>
    <name evidence="1" type="primary">aroQ</name>
    <name type="ordered locus">Sputcn32_3348</name>
</gene>
<sequence length="144" mass="15686">MSHKILLVNGPNLNLLGRREPSVYGHQTLADIVATLNQQAQQAGVELEHIQSNAEFELINAIHATDAQMIIINPAAFTHTSVALRDAMLGVAIPFFEVHLSNVHAREAFRHHSYFSDKAIGVICGFGAQGYEFALSAAIKQLKG</sequence>
<name>AROQ_SHEPC</name>